<protein>
    <recommendedName>
        <fullName evidence="1">ATP synthase gamma chain</fullName>
    </recommendedName>
    <alternativeName>
        <fullName evidence="1">ATP synthase F1 sector gamma subunit</fullName>
    </alternativeName>
    <alternativeName>
        <fullName evidence="1">F-ATPase gamma subunit</fullName>
    </alternativeName>
</protein>
<gene>
    <name evidence="1" type="primary">atpG</name>
    <name type="ordered locus">Rumal_0292</name>
</gene>
<evidence type="ECO:0000255" key="1">
    <source>
        <dbReference type="HAMAP-Rule" id="MF_00815"/>
    </source>
</evidence>
<keyword id="KW-0066">ATP synthesis</keyword>
<keyword id="KW-1003">Cell membrane</keyword>
<keyword id="KW-0139">CF(1)</keyword>
<keyword id="KW-0375">Hydrogen ion transport</keyword>
<keyword id="KW-0406">Ion transport</keyword>
<keyword id="KW-0472">Membrane</keyword>
<keyword id="KW-0813">Transport</keyword>
<proteinExistence type="inferred from homology"/>
<comment type="function">
    <text evidence="1">Produces ATP from ADP in the presence of a proton gradient across the membrane. The gamma chain is believed to be important in regulating ATPase activity and the flow of protons through the CF(0) complex.</text>
</comment>
<comment type="subunit">
    <text evidence="1">F-type ATPases have 2 components, CF(1) - the catalytic core - and CF(0) - the membrane proton channel. CF(1) has five subunits: alpha(3), beta(3), gamma(1), delta(1), epsilon(1). CF(0) has three main subunits: a, b and c.</text>
</comment>
<comment type="subcellular location">
    <subcellularLocation>
        <location evidence="1">Cell membrane</location>
        <topology evidence="1">Peripheral membrane protein</topology>
    </subcellularLocation>
</comment>
<comment type="similarity">
    <text evidence="1">Belongs to the ATPase gamma chain family.</text>
</comment>
<accession>O50141</accession>
<accession>E6UDM1</accession>
<organism>
    <name type="scientific">Ruminococcus albus (strain ATCC 27210 / DSM 20455 / JCM 14654 / NCDO 2250 / 7)</name>
    <dbReference type="NCBI Taxonomy" id="697329"/>
    <lineage>
        <taxon>Bacteria</taxon>
        <taxon>Bacillati</taxon>
        <taxon>Bacillota</taxon>
        <taxon>Clostridia</taxon>
        <taxon>Eubacteriales</taxon>
        <taxon>Oscillospiraceae</taxon>
        <taxon>Ruminococcus</taxon>
    </lineage>
</organism>
<feature type="chain" id="PRO_0000073364" description="ATP synthase gamma chain">
    <location>
        <begin position="1"/>
        <end position="286"/>
    </location>
</feature>
<reference key="1">
    <citation type="submission" date="1997-07" db="EMBL/GenBank/DDBJ databases">
        <title>Sequence analysis of the gene coding proton-translocating ATPase of Ruminococcus albus.</title>
        <authorList>
            <person name="Umemori J."/>
            <person name="Miwa T."/>
            <person name="Nagamine T."/>
            <person name="Ogata K."/>
            <person name="Takenaka A."/>
            <person name="Hino T."/>
        </authorList>
    </citation>
    <scope>NUCLEOTIDE SEQUENCE [GENOMIC DNA]</scope>
    <source>
        <strain>ATCC 27210 / DSM 20455 / JCM 14654 / NCDO 2250 / 7</strain>
    </source>
</reference>
<reference key="2">
    <citation type="journal article" date="2011" name="J. Bacteriol.">
        <title>Complete genome of the cellulolytic ruminal bacterium Ruminococcus albus 7.</title>
        <authorList>
            <person name="Suen G."/>
            <person name="Stevenson D.M."/>
            <person name="Bruce D.C."/>
            <person name="Chertkov O."/>
            <person name="Copeland A."/>
            <person name="Cheng J.F."/>
            <person name="Detter C."/>
            <person name="Detter J.C."/>
            <person name="Goodwin L.A."/>
            <person name="Han C.S."/>
            <person name="Hauser L.J."/>
            <person name="Ivanova N.N."/>
            <person name="Kyrpides N.C."/>
            <person name="Land M.L."/>
            <person name="Lapidus A."/>
            <person name="Lucas S."/>
            <person name="Ovchinnikova G."/>
            <person name="Pitluck S."/>
            <person name="Tapia R."/>
            <person name="Woyke T."/>
            <person name="Boyum J."/>
            <person name="Mead D."/>
            <person name="Weimer P.J."/>
        </authorList>
    </citation>
    <scope>NUCLEOTIDE SEQUENCE [LARGE SCALE GENOMIC DNA]</scope>
    <source>
        <strain>ATCC 27210 / DSM 20455 / JCM 14654 / NCDO 2250 / 7</strain>
    </source>
</reference>
<sequence length="286" mass="31970">MANMKDVKRRIKSVESTMQITKAMQLVASSKMRKAKERAEAVHPFFEGVFQVMADISRDHEFTSVFTKKKFKNSVLLIVIAGDRGLAGGFNTNVLKLAKAKADAITESGGEAVIMAIGKKAVEYFEKREYKLIDGFPQIAEGIELIDAMMIANKVIERFKIGDFDAVELVYTTFVSVMTQEPQHLRILPVENLEYLGQKHPMTIYDPSPEEVFDSLIPEYMGGMLYSAIVDSFASEQAARRTAMESASDNANEMIEKLSLLYNRARQAQITQEITEISSASLNDNS</sequence>
<dbReference type="EMBL" id="AB006151">
    <property type="protein sequence ID" value="BAA23687.1"/>
    <property type="molecule type" value="Genomic_DNA"/>
</dbReference>
<dbReference type="EMBL" id="CP002403">
    <property type="protein sequence ID" value="ADU20849.1"/>
    <property type="molecule type" value="Genomic_DNA"/>
</dbReference>
<dbReference type="RefSeq" id="WP_013497041.1">
    <property type="nucleotide sequence ID" value="NZ_JHYT01000020.1"/>
</dbReference>
<dbReference type="SMR" id="O50141"/>
<dbReference type="STRING" id="697329.Rumal_0292"/>
<dbReference type="KEGG" id="ral:Rumal_0292"/>
<dbReference type="eggNOG" id="COG0224">
    <property type="taxonomic scope" value="Bacteria"/>
</dbReference>
<dbReference type="HOGENOM" id="CLU_050669_0_1_9"/>
<dbReference type="OrthoDB" id="9812769at2"/>
<dbReference type="Proteomes" id="UP000006919">
    <property type="component" value="Chromosome"/>
</dbReference>
<dbReference type="GO" id="GO:0005886">
    <property type="term" value="C:plasma membrane"/>
    <property type="evidence" value="ECO:0007669"/>
    <property type="project" value="UniProtKB-SubCell"/>
</dbReference>
<dbReference type="GO" id="GO:0045259">
    <property type="term" value="C:proton-transporting ATP synthase complex"/>
    <property type="evidence" value="ECO:0007669"/>
    <property type="project" value="UniProtKB-KW"/>
</dbReference>
<dbReference type="GO" id="GO:0005524">
    <property type="term" value="F:ATP binding"/>
    <property type="evidence" value="ECO:0007669"/>
    <property type="project" value="UniProtKB-UniRule"/>
</dbReference>
<dbReference type="GO" id="GO:0046933">
    <property type="term" value="F:proton-transporting ATP synthase activity, rotational mechanism"/>
    <property type="evidence" value="ECO:0007669"/>
    <property type="project" value="UniProtKB-UniRule"/>
</dbReference>
<dbReference type="GO" id="GO:0042777">
    <property type="term" value="P:proton motive force-driven plasma membrane ATP synthesis"/>
    <property type="evidence" value="ECO:0007669"/>
    <property type="project" value="UniProtKB-UniRule"/>
</dbReference>
<dbReference type="CDD" id="cd12151">
    <property type="entry name" value="F1-ATPase_gamma"/>
    <property type="match status" value="1"/>
</dbReference>
<dbReference type="Gene3D" id="3.40.1380.10">
    <property type="match status" value="1"/>
</dbReference>
<dbReference type="Gene3D" id="1.10.287.80">
    <property type="entry name" value="ATP synthase, gamma subunit, helix hairpin domain"/>
    <property type="match status" value="1"/>
</dbReference>
<dbReference type="HAMAP" id="MF_00815">
    <property type="entry name" value="ATP_synth_gamma_bact"/>
    <property type="match status" value="1"/>
</dbReference>
<dbReference type="InterPro" id="IPR035968">
    <property type="entry name" value="ATP_synth_F1_ATPase_gsu"/>
</dbReference>
<dbReference type="InterPro" id="IPR000131">
    <property type="entry name" value="ATP_synth_F1_gsu"/>
</dbReference>
<dbReference type="NCBIfam" id="TIGR01146">
    <property type="entry name" value="ATPsyn_F1gamma"/>
    <property type="match status" value="1"/>
</dbReference>
<dbReference type="PANTHER" id="PTHR11693">
    <property type="entry name" value="ATP SYNTHASE GAMMA CHAIN"/>
    <property type="match status" value="1"/>
</dbReference>
<dbReference type="PANTHER" id="PTHR11693:SF22">
    <property type="entry name" value="ATP SYNTHASE SUBUNIT GAMMA, MITOCHONDRIAL"/>
    <property type="match status" value="1"/>
</dbReference>
<dbReference type="Pfam" id="PF00231">
    <property type="entry name" value="ATP-synt"/>
    <property type="match status" value="1"/>
</dbReference>
<dbReference type="PRINTS" id="PR00126">
    <property type="entry name" value="ATPASEGAMMA"/>
</dbReference>
<dbReference type="SUPFAM" id="SSF52943">
    <property type="entry name" value="ATP synthase (F1-ATPase), gamma subunit"/>
    <property type="match status" value="1"/>
</dbReference>
<name>ATPG_RUMA7</name>